<organism>
    <name type="scientific">Phycomyces blakesleeanus (strain ATCC 8743b / DSM 1359 / FGSC 10004 / NBRC 33097 / NRRL 1555)</name>
    <dbReference type="NCBI Taxonomy" id="763407"/>
    <lineage>
        <taxon>Eukaryota</taxon>
        <taxon>Fungi</taxon>
        <taxon>Fungi incertae sedis</taxon>
        <taxon>Mucoromycota</taxon>
        <taxon>Mucoromycotina</taxon>
        <taxon>Mucoromycetes</taxon>
        <taxon>Mucorales</taxon>
        <taxon>Phycomycetaceae</taxon>
        <taxon>Phycomyces</taxon>
    </lineage>
</organism>
<reference key="1">
    <citation type="journal article" date="1990" name="Mol. Gen. Genet.">
        <title>Isolation and molecular analysis of the orotidine-5'-phosphate decarboxylase gene (pyrG) of Phycomyces blakesleeanus.</title>
        <authorList>
            <person name="Diaz-Minguez J.M."/>
            <person name="Iturriaga E.A."/>
            <person name="Benito E.P."/>
            <person name="Corrochano L."/>
            <person name="Eslava A.P."/>
        </authorList>
    </citation>
    <scope>NUCLEOTIDE SEQUENCE [GENOMIC DNA]</scope>
    <source>
        <strain>ATCC 8743b / DSM 1359 / FGSC 10004 / NBRC 33097 / NRRL 1555</strain>
    </source>
</reference>
<dbReference type="EC" id="4.1.1.23"/>
<dbReference type="EMBL" id="X53601">
    <property type="protein sequence ID" value="CAA37670.1"/>
    <property type="molecule type" value="Genomic_DNA"/>
</dbReference>
<dbReference type="PIR" id="S13736">
    <property type="entry name" value="DCUMOP"/>
</dbReference>
<dbReference type="RefSeq" id="XP_018289133.1">
    <property type="nucleotide sequence ID" value="XM_018439727.1"/>
</dbReference>
<dbReference type="SMR" id="P21593"/>
<dbReference type="GeneID" id="29000633"/>
<dbReference type="VEuPathDB" id="FungiDB:PHYBLDRAFT_200801"/>
<dbReference type="OrthoDB" id="10263753at2759"/>
<dbReference type="UniPathway" id="UPA00070">
    <property type="reaction ID" value="UER00120"/>
</dbReference>
<dbReference type="GO" id="GO:0004588">
    <property type="term" value="F:orotate phosphoribosyltransferase activity"/>
    <property type="evidence" value="ECO:0007669"/>
    <property type="project" value="TreeGrafter"/>
</dbReference>
<dbReference type="GO" id="GO:0004590">
    <property type="term" value="F:orotidine-5'-phosphate decarboxylase activity"/>
    <property type="evidence" value="ECO:0007669"/>
    <property type="project" value="UniProtKB-EC"/>
</dbReference>
<dbReference type="GO" id="GO:0006207">
    <property type="term" value="P:'de novo' pyrimidine nucleobase biosynthetic process"/>
    <property type="evidence" value="ECO:0007669"/>
    <property type="project" value="InterPro"/>
</dbReference>
<dbReference type="GO" id="GO:0044205">
    <property type="term" value="P:'de novo' UMP biosynthetic process"/>
    <property type="evidence" value="ECO:0007669"/>
    <property type="project" value="UniProtKB-UniPathway"/>
</dbReference>
<dbReference type="CDD" id="cd04725">
    <property type="entry name" value="OMP_decarboxylase_like"/>
    <property type="match status" value="1"/>
</dbReference>
<dbReference type="FunFam" id="3.20.20.70:FF:000114">
    <property type="entry name" value="Decarboxylase,orotidine phosphate"/>
    <property type="match status" value="1"/>
</dbReference>
<dbReference type="Gene3D" id="3.20.20.70">
    <property type="entry name" value="Aldolase class I"/>
    <property type="match status" value="1"/>
</dbReference>
<dbReference type="InterPro" id="IPR013785">
    <property type="entry name" value="Aldolase_TIM"/>
</dbReference>
<dbReference type="InterPro" id="IPR014732">
    <property type="entry name" value="OMPdecase"/>
</dbReference>
<dbReference type="InterPro" id="IPR018089">
    <property type="entry name" value="OMPdecase_AS"/>
</dbReference>
<dbReference type="InterPro" id="IPR001754">
    <property type="entry name" value="OMPdeCOase_dom"/>
</dbReference>
<dbReference type="InterPro" id="IPR011060">
    <property type="entry name" value="RibuloseP-bd_barrel"/>
</dbReference>
<dbReference type="NCBIfam" id="TIGR01740">
    <property type="entry name" value="pyrF"/>
    <property type="match status" value="1"/>
</dbReference>
<dbReference type="PANTHER" id="PTHR19278">
    <property type="entry name" value="OROTATE PHOSPHORIBOSYLTRANSFERASE"/>
    <property type="match status" value="1"/>
</dbReference>
<dbReference type="PANTHER" id="PTHR19278:SF9">
    <property type="entry name" value="URIDINE 5'-MONOPHOSPHATE SYNTHASE"/>
    <property type="match status" value="1"/>
</dbReference>
<dbReference type="Pfam" id="PF00215">
    <property type="entry name" value="OMPdecase"/>
    <property type="match status" value="1"/>
</dbReference>
<dbReference type="SMART" id="SM00934">
    <property type="entry name" value="OMPdecase"/>
    <property type="match status" value="1"/>
</dbReference>
<dbReference type="SUPFAM" id="SSF51366">
    <property type="entry name" value="Ribulose-phoshate binding barrel"/>
    <property type="match status" value="1"/>
</dbReference>
<dbReference type="PROSITE" id="PS00156">
    <property type="entry name" value="OMPDECASE"/>
    <property type="match status" value="1"/>
</dbReference>
<evidence type="ECO:0000250" key="1"/>
<evidence type="ECO:0000255" key="2">
    <source>
        <dbReference type="PROSITE-ProRule" id="PRU10110"/>
    </source>
</evidence>
<evidence type="ECO:0000305" key="3"/>
<name>PYRF_PHYB8</name>
<comment type="catalytic activity">
    <reaction evidence="2">
        <text>orotidine 5'-phosphate + H(+) = UMP + CO2</text>
        <dbReference type="Rhea" id="RHEA:11596"/>
        <dbReference type="ChEBI" id="CHEBI:15378"/>
        <dbReference type="ChEBI" id="CHEBI:16526"/>
        <dbReference type="ChEBI" id="CHEBI:57538"/>
        <dbReference type="ChEBI" id="CHEBI:57865"/>
        <dbReference type="EC" id="4.1.1.23"/>
    </reaction>
</comment>
<comment type="pathway">
    <text>Pyrimidine metabolism; UMP biosynthesis via de novo pathway; UMP from orotate: step 2/2.</text>
</comment>
<comment type="similarity">
    <text evidence="3">Belongs to the OMP decarboxylase family.</text>
</comment>
<gene>
    <name type="primary">pyrG</name>
</gene>
<keyword id="KW-0210">Decarboxylase</keyword>
<keyword id="KW-0456">Lyase</keyword>
<keyword id="KW-0665">Pyrimidine biosynthesis</keyword>
<protein>
    <recommendedName>
        <fullName>Orotidine 5'-phosphate decarboxylase</fullName>
        <ecNumber>4.1.1.23</ecNumber>
    </recommendedName>
    <alternativeName>
        <fullName>OMP decarboxylase</fullName>
        <shortName>OMPDCase</shortName>
        <shortName>OMPdecase</shortName>
    </alternativeName>
    <alternativeName>
        <fullName>Uridine 5'-monophosphate synthase</fullName>
        <shortName>UMP synthase</shortName>
    </alternativeName>
</protein>
<accession>P21593</accession>
<feature type="chain" id="PRO_0000134671" description="Orotidine 5'-phosphate decarboxylase">
    <location>
        <begin position="1"/>
        <end position="267"/>
    </location>
</feature>
<feature type="active site" description="Proton donor" evidence="2">
    <location>
        <position position="95"/>
    </location>
</feature>
<feature type="binding site" evidence="1">
    <location>
        <position position="40"/>
    </location>
    <ligand>
        <name>substrate</name>
    </ligand>
</feature>
<feature type="binding site" evidence="1">
    <location>
        <begin position="62"/>
        <end position="64"/>
    </location>
    <ligand>
        <name>substrate</name>
    </ligand>
</feature>
<feature type="binding site" evidence="1">
    <location>
        <begin position="93"/>
        <end position="102"/>
    </location>
    <ligand>
        <name>substrate</name>
    </ligand>
</feature>
<feature type="binding site" evidence="1">
    <location>
        <position position="215"/>
    </location>
    <ligand>
        <name>substrate</name>
    </ligand>
</feature>
<feature type="binding site" evidence="1">
    <location>
        <position position="234"/>
    </location>
    <ligand>
        <name>substrate</name>
    </ligand>
</feature>
<sequence length="267" mass="29899">MMLNTYKSYTERAEQHPNACARSLFELMERKKTNLSVAVDVTTKKELLSIADSVGPYVCVLKTHIDIVEDFDKDLVAQLEALAKKHDFLIFEDRKFADIGNTVKHQYEKGVYKIASWSHITNAHTVPGEGIIKGLGEVGLPLGRGLLLLAEMSSKGALTKGSYTTESVEMARRNKDFVFGFIAQHKMNEYPDEDFVVMTPGVGLDIKGDGLGQQYRTPHEVIVESGCDVIIVGRGIYGKPDEVEAQSKRYREAGWNAYLERVRMHKA</sequence>
<proteinExistence type="inferred from homology"/>